<accession>Q9GNF0</accession>
<accession>Q55BI1</accession>
<reference key="1">
    <citation type="submission" date="2000-07" db="EMBL/GenBank/DDBJ databases">
        <title>Potential new binding partners of comitin.</title>
        <authorList>
            <person name="Schreiner T."/>
            <person name="Kuspa A."/>
            <person name="Noegel A.A."/>
        </authorList>
    </citation>
    <scope>NUCLEOTIDE SEQUENCE [GENOMIC DNA / MRNA]</scope>
    <source>
        <strain>AX2</strain>
    </source>
</reference>
<reference key="2">
    <citation type="journal article" date="2002" name="Nature">
        <title>Sequence and analysis of chromosome 2 of Dictyostelium discoideum.</title>
        <authorList>
            <person name="Gloeckner G."/>
            <person name="Eichinger L."/>
            <person name="Szafranski K."/>
            <person name="Pachebat J.A."/>
            <person name="Bankier A.T."/>
            <person name="Dear P.H."/>
            <person name="Lehmann R."/>
            <person name="Baumgart C."/>
            <person name="Parra G."/>
            <person name="Abril J.F."/>
            <person name="Guigo R."/>
            <person name="Kumpf K."/>
            <person name="Tunggal B."/>
            <person name="Cox E.C."/>
            <person name="Quail M.A."/>
            <person name="Platzer M."/>
            <person name="Rosenthal A."/>
            <person name="Noegel A.A."/>
        </authorList>
    </citation>
    <scope>NUCLEOTIDE SEQUENCE [LARGE SCALE GENOMIC DNA]</scope>
    <source>
        <strain>AX4</strain>
    </source>
</reference>
<reference key="3">
    <citation type="journal article" date="2005" name="Nature">
        <title>The genome of the social amoeba Dictyostelium discoideum.</title>
        <authorList>
            <person name="Eichinger L."/>
            <person name="Pachebat J.A."/>
            <person name="Gloeckner G."/>
            <person name="Rajandream M.A."/>
            <person name="Sucgang R."/>
            <person name="Berriman M."/>
            <person name="Song J."/>
            <person name="Olsen R."/>
            <person name="Szafranski K."/>
            <person name="Xu Q."/>
            <person name="Tunggal B."/>
            <person name="Kummerfeld S."/>
            <person name="Madera M."/>
            <person name="Konfortov B.A."/>
            <person name="Rivero F."/>
            <person name="Bankier A.T."/>
            <person name="Lehmann R."/>
            <person name="Hamlin N."/>
            <person name="Davies R."/>
            <person name="Gaudet P."/>
            <person name="Fey P."/>
            <person name="Pilcher K."/>
            <person name="Chen G."/>
            <person name="Saunders D."/>
            <person name="Sodergren E.J."/>
            <person name="Davis P."/>
            <person name="Kerhornou A."/>
            <person name="Nie X."/>
            <person name="Hall N."/>
            <person name="Anjard C."/>
            <person name="Hemphill L."/>
            <person name="Bason N."/>
            <person name="Farbrother P."/>
            <person name="Desany B."/>
            <person name="Just E."/>
            <person name="Morio T."/>
            <person name="Rost R."/>
            <person name="Churcher C.M."/>
            <person name="Cooper J."/>
            <person name="Haydock S."/>
            <person name="van Driessche N."/>
            <person name="Cronin A."/>
            <person name="Goodhead I."/>
            <person name="Muzny D.M."/>
            <person name="Mourier T."/>
            <person name="Pain A."/>
            <person name="Lu M."/>
            <person name="Harper D."/>
            <person name="Lindsay R."/>
            <person name="Hauser H."/>
            <person name="James K.D."/>
            <person name="Quiles M."/>
            <person name="Madan Babu M."/>
            <person name="Saito T."/>
            <person name="Buchrieser C."/>
            <person name="Wardroper A."/>
            <person name="Felder M."/>
            <person name="Thangavelu M."/>
            <person name="Johnson D."/>
            <person name="Knights A."/>
            <person name="Loulseged H."/>
            <person name="Mungall K.L."/>
            <person name="Oliver K."/>
            <person name="Price C."/>
            <person name="Quail M.A."/>
            <person name="Urushihara H."/>
            <person name="Hernandez J."/>
            <person name="Rabbinowitsch E."/>
            <person name="Steffen D."/>
            <person name="Sanders M."/>
            <person name="Ma J."/>
            <person name="Kohara Y."/>
            <person name="Sharp S."/>
            <person name="Simmonds M.N."/>
            <person name="Spiegler S."/>
            <person name="Tivey A."/>
            <person name="Sugano S."/>
            <person name="White B."/>
            <person name="Walker D."/>
            <person name="Woodward J.R."/>
            <person name="Winckler T."/>
            <person name="Tanaka Y."/>
            <person name="Shaulsky G."/>
            <person name="Schleicher M."/>
            <person name="Weinstock G.M."/>
            <person name="Rosenthal A."/>
            <person name="Cox E.C."/>
            <person name="Chisholm R.L."/>
            <person name="Gibbs R.A."/>
            <person name="Loomis W.F."/>
            <person name="Platzer M."/>
            <person name="Kay R.R."/>
            <person name="Williams J.G."/>
            <person name="Dear P.H."/>
            <person name="Noegel A.A."/>
            <person name="Barrell B.G."/>
            <person name="Kuspa A."/>
        </authorList>
    </citation>
    <scope>NUCLEOTIDE SEQUENCE [LARGE SCALE GENOMIC DNA]</scope>
    <source>
        <strain>AX4</strain>
    </source>
</reference>
<sequence>MENRYISRIETISSHLLSTNDVSSQNESESITFVKPLPKNKKDHDQSIESDSSFTREKQFEEELDILGEINSKTGLFEIKQVPYQLSFDQGFFHACRAIEILTEKDPKRIICLGIAGPVGAGKTTLANKIGSLVNGVIISLQDFVKLENVKDNNYDDPVLIDFDKVISTLNELKENKTVIIPKIVNRKMESRSISLSTSKVIILEGAYALSARIRPLLDISVAITGGVHLDLIKSIMRGIVTSGKNSSKDVLAQITNVVFPMFKAFVEPDLDQAKIKIHSSFNPMSQVVEPVYVCKAKYDNNKQFFDQFLSSLNVVPVKKNFSDMYLYPPKYGVDGISQADKRNWIRIRRSEHGQFNITFYNEMMDGAVNTRPSLNFEISVKTLGGLLSLGYQIGAILNRTVEVWYDKNGVVITKEYIKELEKHFIQIKGHSRREVLDSAEKLKITGNHVPQTFLYLYFKKLKKSKNPNYSKLKPNNTNSKILKNNKDKKNL</sequence>
<proteinExistence type="evidence at transcript level"/>
<gene>
    <name type="primary">udkD</name>
    <name type="ORF">DDB_G0271146</name>
</gene>
<protein>
    <recommendedName>
        <fullName>Uridine-cytidine kinase D</fullName>
        <ecNumber>2.7.1.48</ecNumber>
    </recommendedName>
    <alternativeName>
        <fullName>Cytidine monophosphokinase D</fullName>
    </alternativeName>
    <alternativeName>
        <fullName>Uridine monophosphokinase D</fullName>
    </alternativeName>
</protein>
<keyword id="KW-0067">ATP-binding</keyword>
<keyword id="KW-0418">Kinase</keyword>
<keyword id="KW-0547">Nucleotide-binding</keyword>
<keyword id="KW-1185">Reference proteome</keyword>
<keyword id="KW-0808">Transferase</keyword>
<comment type="function">
    <text evidence="1">Catalyzes the conversion of uridine into uridine monophosphate and cytidine into cytidine monophosphate in the pyrimidine salvage pathway.</text>
</comment>
<comment type="catalytic activity">
    <reaction>
        <text>uridine + ATP = UMP + ADP + H(+)</text>
        <dbReference type="Rhea" id="RHEA:16825"/>
        <dbReference type="ChEBI" id="CHEBI:15378"/>
        <dbReference type="ChEBI" id="CHEBI:16704"/>
        <dbReference type="ChEBI" id="CHEBI:30616"/>
        <dbReference type="ChEBI" id="CHEBI:57865"/>
        <dbReference type="ChEBI" id="CHEBI:456216"/>
        <dbReference type="EC" id="2.7.1.48"/>
    </reaction>
</comment>
<comment type="catalytic activity">
    <reaction>
        <text>cytidine + ATP = CMP + ADP + H(+)</text>
        <dbReference type="Rhea" id="RHEA:24674"/>
        <dbReference type="ChEBI" id="CHEBI:15378"/>
        <dbReference type="ChEBI" id="CHEBI:17562"/>
        <dbReference type="ChEBI" id="CHEBI:30616"/>
        <dbReference type="ChEBI" id="CHEBI:60377"/>
        <dbReference type="ChEBI" id="CHEBI:456216"/>
        <dbReference type="EC" id="2.7.1.48"/>
    </reaction>
</comment>
<comment type="pathway">
    <text>Pyrimidine metabolism; CTP biosynthesis via salvage pathway; CTP from cytidine: step 1/3.</text>
</comment>
<comment type="pathway">
    <text>Pyrimidine metabolism; UMP biosynthesis via salvage pathway; UMP from uridine: step 1/1.</text>
</comment>
<comment type="similarity">
    <text evidence="5">Belongs to the uridine kinase family.</text>
</comment>
<evidence type="ECO:0000250" key="1"/>
<evidence type="ECO:0000255" key="2"/>
<evidence type="ECO:0000255" key="3">
    <source>
        <dbReference type="PROSITE-ProRule" id="PRU01044"/>
    </source>
</evidence>
<evidence type="ECO:0000256" key="4">
    <source>
        <dbReference type="SAM" id="MobiDB-lite"/>
    </source>
</evidence>
<evidence type="ECO:0000305" key="5"/>
<name>UCKD_DICDI</name>
<feature type="chain" id="PRO_0000371327" description="Uridine-cytidine kinase D">
    <location>
        <begin position="1"/>
        <end position="492"/>
    </location>
</feature>
<feature type="domain" description="CYTH" evidence="3">
    <location>
        <begin position="290"/>
        <end position="460"/>
    </location>
</feature>
<feature type="region of interest" description="Disordered" evidence="4">
    <location>
        <begin position="36"/>
        <end position="56"/>
    </location>
</feature>
<feature type="region of interest" description="Disordered" evidence="4">
    <location>
        <begin position="468"/>
        <end position="492"/>
    </location>
</feature>
<feature type="compositionally biased region" description="Low complexity" evidence="4">
    <location>
        <begin position="468"/>
        <end position="483"/>
    </location>
</feature>
<feature type="binding site" evidence="2">
    <location>
        <begin position="117"/>
        <end position="124"/>
    </location>
    <ligand>
        <name>ATP</name>
        <dbReference type="ChEBI" id="CHEBI:30616"/>
    </ligand>
</feature>
<organism>
    <name type="scientific">Dictyostelium discoideum</name>
    <name type="common">Social amoeba</name>
    <dbReference type="NCBI Taxonomy" id="44689"/>
    <lineage>
        <taxon>Eukaryota</taxon>
        <taxon>Amoebozoa</taxon>
        <taxon>Evosea</taxon>
        <taxon>Eumycetozoa</taxon>
        <taxon>Dictyostelia</taxon>
        <taxon>Dictyosteliales</taxon>
        <taxon>Dictyosteliaceae</taxon>
        <taxon>Dictyostelium</taxon>
    </lineage>
</organism>
<dbReference type="EC" id="2.7.1.48"/>
<dbReference type="EMBL" id="AY007802">
    <property type="protein sequence ID" value="AAG32531.1"/>
    <property type="molecule type" value="mRNA"/>
</dbReference>
<dbReference type="EMBL" id="AY007803">
    <property type="protein sequence ID" value="AAG32532.1"/>
    <property type="molecule type" value="Genomic_DNA"/>
</dbReference>
<dbReference type="EMBL" id="AAFI02000006">
    <property type="protein sequence ID" value="EAL71703.1"/>
    <property type="molecule type" value="Genomic_DNA"/>
</dbReference>
<dbReference type="RefSeq" id="XP_645631.1">
    <property type="nucleotide sequence ID" value="XM_640539.1"/>
</dbReference>
<dbReference type="SMR" id="Q9GNF0"/>
<dbReference type="FunCoup" id="Q9GNF0">
    <property type="interactions" value="167"/>
</dbReference>
<dbReference type="STRING" id="44689.Q9GNF0"/>
<dbReference type="PaxDb" id="44689-DDB0215349"/>
<dbReference type="EnsemblProtists" id="EAL71703">
    <property type="protein sequence ID" value="EAL71703"/>
    <property type="gene ID" value="DDB_G0271146"/>
</dbReference>
<dbReference type="GeneID" id="8617823"/>
<dbReference type="KEGG" id="ddi:DDB_G0271146"/>
<dbReference type="dictyBase" id="DDB_G0271146">
    <property type="gene designation" value="udkD"/>
</dbReference>
<dbReference type="VEuPathDB" id="AmoebaDB:DDB_G0271146"/>
<dbReference type="eggNOG" id="KOG4203">
    <property type="taxonomic scope" value="Eukaryota"/>
</dbReference>
<dbReference type="HOGENOM" id="CLU_028566_0_0_1"/>
<dbReference type="InParanoid" id="Q9GNF0"/>
<dbReference type="OMA" id="DQGFFHA"/>
<dbReference type="PhylomeDB" id="Q9GNF0"/>
<dbReference type="Reactome" id="R-DDI-196807">
    <property type="pathway name" value="Nicotinate metabolism"/>
</dbReference>
<dbReference type="Reactome" id="R-DDI-73614">
    <property type="pathway name" value="Pyrimidine salvage"/>
</dbReference>
<dbReference type="UniPathway" id="UPA00574">
    <property type="reaction ID" value="UER00637"/>
</dbReference>
<dbReference type="UniPathway" id="UPA00579">
    <property type="reaction ID" value="UER00640"/>
</dbReference>
<dbReference type="PRO" id="PR:Q9GNF0"/>
<dbReference type="Proteomes" id="UP000002195">
    <property type="component" value="Chromosome 2"/>
</dbReference>
<dbReference type="GO" id="GO:0005737">
    <property type="term" value="C:cytoplasm"/>
    <property type="evidence" value="ECO:0000318"/>
    <property type="project" value="GO_Central"/>
</dbReference>
<dbReference type="GO" id="GO:0005524">
    <property type="term" value="F:ATP binding"/>
    <property type="evidence" value="ECO:0007669"/>
    <property type="project" value="UniProtKB-KW"/>
</dbReference>
<dbReference type="GO" id="GO:0043771">
    <property type="term" value="F:cytidine kinase activity"/>
    <property type="evidence" value="ECO:0007669"/>
    <property type="project" value="RHEA"/>
</dbReference>
<dbReference type="GO" id="GO:0004849">
    <property type="term" value="F:uridine kinase activity"/>
    <property type="evidence" value="ECO:0007669"/>
    <property type="project" value="UniProtKB-EC"/>
</dbReference>
<dbReference type="GO" id="GO:0044211">
    <property type="term" value="P:CTP salvage"/>
    <property type="evidence" value="ECO:0007669"/>
    <property type="project" value="UniProtKB-UniPathway"/>
</dbReference>
<dbReference type="GO" id="GO:0044206">
    <property type="term" value="P:UMP salvage"/>
    <property type="evidence" value="ECO:0007669"/>
    <property type="project" value="UniProtKB-UniPathway"/>
</dbReference>
<dbReference type="CDD" id="cd02028">
    <property type="entry name" value="UMPK_like"/>
    <property type="match status" value="1"/>
</dbReference>
<dbReference type="Gene3D" id="2.40.320.10">
    <property type="entry name" value="Hypothetical Protein Pfu-838710-001"/>
    <property type="match status" value="1"/>
</dbReference>
<dbReference type="Gene3D" id="3.40.50.300">
    <property type="entry name" value="P-loop containing nucleotide triphosphate hydrolases"/>
    <property type="match status" value="1"/>
</dbReference>
<dbReference type="InterPro" id="IPR023577">
    <property type="entry name" value="CYTH_domain"/>
</dbReference>
<dbReference type="InterPro" id="IPR027417">
    <property type="entry name" value="P-loop_NTPase"/>
</dbReference>
<dbReference type="InterPro" id="IPR006083">
    <property type="entry name" value="PRK/URK"/>
</dbReference>
<dbReference type="PANTHER" id="PTHR10285">
    <property type="entry name" value="URIDINE KINASE"/>
    <property type="match status" value="1"/>
</dbReference>
<dbReference type="Pfam" id="PF01928">
    <property type="entry name" value="CYTH"/>
    <property type="match status" value="1"/>
</dbReference>
<dbReference type="Pfam" id="PF00485">
    <property type="entry name" value="PRK"/>
    <property type="match status" value="1"/>
</dbReference>
<dbReference type="SUPFAM" id="SSF52540">
    <property type="entry name" value="P-loop containing nucleoside triphosphate hydrolases"/>
    <property type="match status" value="1"/>
</dbReference>
<dbReference type="PROSITE" id="PS51707">
    <property type="entry name" value="CYTH"/>
    <property type="match status" value="1"/>
</dbReference>